<comment type="function">
    <text evidence="1">Catalyzes the interconversion of 2-phosphoglycerate and 3-phosphoglycerate.</text>
</comment>
<comment type="catalytic activity">
    <reaction evidence="1">
        <text>(2R)-2-phosphoglycerate = (2R)-3-phosphoglycerate</text>
        <dbReference type="Rhea" id="RHEA:15901"/>
        <dbReference type="ChEBI" id="CHEBI:58272"/>
        <dbReference type="ChEBI" id="CHEBI:58289"/>
        <dbReference type="EC" id="5.4.2.11"/>
    </reaction>
</comment>
<comment type="pathway">
    <text evidence="1">Carbohydrate degradation; glycolysis; pyruvate from D-glyceraldehyde 3-phosphate: step 3/5.</text>
</comment>
<comment type="subunit">
    <text evidence="1">Homodimer.</text>
</comment>
<comment type="similarity">
    <text evidence="1">Belongs to the phosphoglycerate mutase family. BPG-dependent PGAM subfamily.</text>
</comment>
<organism>
    <name type="scientific">Nitratidesulfovibrio vulgaris (strain DP4)</name>
    <name type="common">Desulfovibrio vulgaris</name>
    <dbReference type="NCBI Taxonomy" id="391774"/>
    <lineage>
        <taxon>Bacteria</taxon>
        <taxon>Pseudomonadati</taxon>
        <taxon>Thermodesulfobacteriota</taxon>
        <taxon>Desulfovibrionia</taxon>
        <taxon>Desulfovibrionales</taxon>
        <taxon>Desulfovibrionaceae</taxon>
        <taxon>Nitratidesulfovibrio</taxon>
    </lineage>
</organism>
<accession>A1VAI9</accession>
<proteinExistence type="inferred from homology"/>
<sequence length="250" mass="28173">MARLILLRHGQSAWNLENRFTGWTDVDLSPAGEAEALAAARLIRDEGLDFSVCHTSMLTRAIRTLHLVQHELDRLWTPVRKHWRLNERHYGALQGLDKRETAARHGEDQVFVWRRSYDVPPPVIAPDDPKHPVHDPRYADVPPDVLPCGESLEATVARVLPYWYDAIAPDLMAGRDVLVAAHGNSLRALVMHLDGLDREAVSRLDIPTGLPRLYELDAALRPVSYRYLGDPAEAEERARAVAAQGRLEKN</sequence>
<keyword id="KW-0312">Gluconeogenesis</keyword>
<keyword id="KW-0324">Glycolysis</keyword>
<keyword id="KW-0413">Isomerase</keyword>
<gene>
    <name evidence="1" type="primary">gpmA</name>
    <name type="ordered locus">Dvul_0432</name>
</gene>
<evidence type="ECO:0000255" key="1">
    <source>
        <dbReference type="HAMAP-Rule" id="MF_01039"/>
    </source>
</evidence>
<protein>
    <recommendedName>
        <fullName evidence="1">2,3-bisphosphoglycerate-dependent phosphoglycerate mutase</fullName>
        <shortName evidence="1">BPG-dependent PGAM</shortName>
        <shortName evidence="1">PGAM</shortName>
        <shortName evidence="1">Phosphoglyceromutase</shortName>
        <shortName evidence="1">dPGM</shortName>
        <ecNumber evidence="1">5.4.2.11</ecNumber>
    </recommendedName>
</protein>
<feature type="chain" id="PRO_1000064052" description="2,3-bisphosphoglycerate-dependent phosphoglycerate mutase">
    <location>
        <begin position="1"/>
        <end position="250"/>
    </location>
</feature>
<feature type="active site" description="Tele-phosphohistidine intermediate" evidence="1">
    <location>
        <position position="9"/>
    </location>
</feature>
<feature type="active site" description="Proton donor/acceptor" evidence="1">
    <location>
        <position position="87"/>
    </location>
</feature>
<feature type="binding site" evidence="1">
    <location>
        <begin position="8"/>
        <end position="15"/>
    </location>
    <ligand>
        <name>substrate</name>
    </ligand>
</feature>
<feature type="binding site" evidence="1">
    <location>
        <begin position="21"/>
        <end position="22"/>
    </location>
    <ligand>
        <name>substrate</name>
    </ligand>
</feature>
<feature type="binding site" evidence="1">
    <location>
        <position position="60"/>
    </location>
    <ligand>
        <name>substrate</name>
    </ligand>
</feature>
<feature type="binding site" evidence="1">
    <location>
        <begin position="87"/>
        <end position="90"/>
    </location>
    <ligand>
        <name>substrate</name>
    </ligand>
</feature>
<feature type="binding site" evidence="1">
    <location>
        <position position="98"/>
    </location>
    <ligand>
        <name>substrate</name>
    </ligand>
</feature>
<feature type="binding site" evidence="1">
    <location>
        <begin position="114"/>
        <end position="115"/>
    </location>
    <ligand>
        <name>substrate</name>
    </ligand>
</feature>
<feature type="binding site" evidence="1">
    <location>
        <begin position="183"/>
        <end position="184"/>
    </location>
    <ligand>
        <name>substrate</name>
    </ligand>
</feature>
<feature type="site" description="Transition state stabilizer" evidence="1">
    <location>
        <position position="182"/>
    </location>
</feature>
<dbReference type="EC" id="5.4.2.11" evidence="1"/>
<dbReference type="EMBL" id="CP000527">
    <property type="protein sequence ID" value="ABM27455.1"/>
    <property type="molecule type" value="Genomic_DNA"/>
</dbReference>
<dbReference type="RefSeq" id="WP_011791608.1">
    <property type="nucleotide sequence ID" value="NC_008751.1"/>
</dbReference>
<dbReference type="SMR" id="A1VAI9"/>
<dbReference type="KEGG" id="dvl:Dvul_0432"/>
<dbReference type="HOGENOM" id="CLU_033323_1_1_7"/>
<dbReference type="UniPathway" id="UPA00109">
    <property type="reaction ID" value="UER00186"/>
</dbReference>
<dbReference type="Proteomes" id="UP000009173">
    <property type="component" value="Chromosome"/>
</dbReference>
<dbReference type="GO" id="GO:0004619">
    <property type="term" value="F:phosphoglycerate mutase activity"/>
    <property type="evidence" value="ECO:0007669"/>
    <property type="project" value="UniProtKB-EC"/>
</dbReference>
<dbReference type="GO" id="GO:0006094">
    <property type="term" value="P:gluconeogenesis"/>
    <property type="evidence" value="ECO:0007669"/>
    <property type="project" value="UniProtKB-UniRule"/>
</dbReference>
<dbReference type="GO" id="GO:0006096">
    <property type="term" value="P:glycolytic process"/>
    <property type="evidence" value="ECO:0007669"/>
    <property type="project" value="UniProtKB-UniRule"/>
</dbReference>
<dbReference type="CDD" id="cd07067">
    <property type="entry name" value="HP_PGM_like"/>
    <property type="match status" value="1"/>
</dbReference>
<dbReference type="FunFam" id="3.40.50.1240:FF:000003">
    <property type="entry name" value="2,3-bisphosphoglycerate-dependent phosphoglycerate mutase"/>
    <property type="match status" value="1"/>
</dbReference>
<dbReference type="Gene3D" id="3.40.50.1240">
    <property type="entry name" value="Phosphoglycerate mutase-like"/>
    <property type="match status" value="1"/>
</dbReference>
<dbReference type="HAMAP" id="MF_01039">
    <property type="entry name" value="PGAM_GpmA"/>
    <property type="match status" value="1"/>
</dbReference>
<dbReference type="InterPro" id="IPR013078">
    <property type="entry name" value="His_Pase_superF_clade-1"/>
</dbReference>
<dbReference type="InterPro" id="IPR029033">
    <property type="entry name" value="His_PPase_superfam"/>
</dbReference>
<dbReference type="InterPro" id="IPR001345">
    <property type="entry name" value="PG/BPGM_mutase_AS"/>
</dbReference>
<dbReference type="InterPro" id="IPR005952">
    <property type="entry name" value="Phosphogly_mut1"/>
</dbReference>
<dbReference type="NCBIfam" id="TIGR01258">
    <property type="entry name" value="pgm_1"/>
    <property type="match status" value="1"/>
</dbReference>
<dbReference type="NCBIfam" id="NF010713">
    <property type="entry name" value="PRK14115.1"/>
    <property type="match status" value="1"/>
</dbReference>
<dbReference type="PANTHER" id="PTHR11931">
    <property type="entry name" value="PHOSPHOGLYCERATE MUTASE"/>
    <property type="match status" value="1"/>
</dbReference>
<dbReference type="Pfam" id="PF00300">
    <property type="entry name" value="His_Phos_1"/>
    <property type="match status" value="2"/>
</dbReference>
<dbReference type="PIRSF" id="PIRSF000709">
    <property type="entry name" value="6PFK_2-Ptase"/>
    <property type="match status" value="1"/>
</dbReference>
<dbReference type="SMART" id="SM00855">
    <property type="entry name" value="PGAM"/>
    <property type="match status" value="1"/>
</dbReference>
<dbReference type="SUPFAM" id="SSF53254">
    <property type="entry name" value="Phosphoglycerate mutase-like"/>
    <property type="match status" value="1"/>
</dbReference>
<dbReference type="PROSITE" id="PS00175">
    <property type="entry name" value="PG_MUTASE"/>
    <property type="match status" value="1"/>
</dbReference>
<reference key="1">
    <citation type="journal article" date="2009" name="Environ. Microbiol.">
        <title>Contribution of mobile genetic elements to Desulfovibrio vulgaris genome plasticity.</title>
        <authorList>
            <person name="Walker C.B."/>
            <person name="Stolyar S."/>
            <person name="Chivian D."/>
            <person name="Pinel N."/>
            <person name="Gabster J.A."/>
            <person name="Dehal P.S."/>
            <person name="He Z."/>
            <person name="Yang Z.K."/>
            <person name="Yen H.C."/>
            <person name="Zhou J."/>
            <person name="Wall J.D."/>
            <person name="Hazen T.C."/>
            <person name="Arkin A.P."/>
            <person name="Stahl D.A."/>
        </authorList>
    </citation>
    <scope>NUCLEOTIDE SEQUENCE [LARGE SCALE GENOMIC DNA]</scope>
    <source>
        <strain>DP4</strain>
    </source>
</reference>
<name>GPMA_NITV4</name>